<keyword id="KW-0002">3D-structure</keyword>
<keyword id="KW-0025">Alternative splicing</keyword>
<keyword id="KW-0067">ATP-binding</keyword>
<keyword id="KW-1003">Cell membrane</keyword>
<keyword id="KW-0963">Cytoplasm</keyword>
<keyword id="KW-0225">Disease variant</keyword>
<keyword id="KW-0890">Hereditary spastic paraplegia</keyword>
<keyword id="KW-0418">Kinase</keyword>
<keyword id="KW-0443">Lipid metabolism</keyword>
<keyword id="KW-0472">Membrane</keyword>
<keyword id="KW-0523">Neurodegeneration</keyword>
<keyword id="KW-0547">Nucleotide-binding</keyword>
<keyword id="KW-0597">Phosphoprotein</keyword>
<keyword id="KW-1267">Proteomics identification</keyword>
<keyword id="KW-1185">Reference proteome</keyword>
<keyword id="KW-0808">Transferase</keyword>
<protein>
    <recommendedName>
        <fullName>Phosphatidylinositol 4-kinase alpha</fullName>
        <shortName>PI4-kinase alpha</shortName>
        <shortName>PI4K-alpha</shortName>
        <shortName>PtdIns-4-kinase alpha</shortName>
        <ecNumber evidence="5">2.7.1.67</ecNumber>
    </recommendedName>
    <alternativeName>
        <fullName>Phosphatidylinositol 4-Kinase III alpha</fullName>
    </alternativeName>
</protein>
<evidence type="ECO:0000250" key="1">
    <source>
        <dbReference type="UniProtKB" id="E9Q3L2"/>
    </source>
</evidence>
<evidence type="ECO:0000250" key="2">
    <source>
        <dbReference type="UniProtKB" id="O08662"/>
    </source>
</evidence>
<evidence type="ECO:0000255" key="3">
    <source>
        <dbReference type="PROSITE-ProRule" id="PRU00269"/>
    </source>
</evidence>
<evidence type="ECO:0000255" key="4">
    <source>
        <dbReference type="PROSITE-ProRule" id="PRU00878"/>
    </source>
</evidence>
<evidence type="ECO:0000269" key="5">
    <source>
    </source>
</evidence>
<evidence type="ECO:0000269" key="6">
    <source>
    </source>
</evidence>
<evidence type="ECO:0000269" key="7">
    <source>
    </source>
</evidence>
<evidence type="ECO:0000269" key="8">
    <source>
    </source>
</evidence>
<evidence type="ECO:0000269" key="9">
    <source>
    </source>
</evidence>
<evidence type="ECO:0000269" key="10">
    <source>
    </source>
</evidence>
<evidence type="ECO:0000269" key="11">
    <source>
    </source>
</evidence>
<evidence type="ECO:0000269" key="12">
    <source>
    </source>
</evidence>
<evidence type="ECO:0000269" key="13">
    <source>
    </source>
</evidence>
<evidence type="ECO:0000269" key="14">
    <source>
    </source>
</evidence>
<evidence type="ECO:0000303" key="15">
    <source>
    </source>
</evidence>
<evidence type="ECO:0000303" key="16">
    <source>
    </source>
</evidence>
<evidence type="ECO:0000305" key="17"/>
<evidence type="ECO:0000305" key="18">
    <source>
    </source>
</evidence>
<evidence type="ECO:0007744" key="19">
    <source>
    </source>
</evidence>
<evidence type="ECO:0007744" key="20">
    <source>
    </source>
</evidence>
<evidence type="ECO:0007744" key="21">
    <source>
    </source>
</evidence>
<evidence type="ECO:0007744" key="22">
    <source>
    </source>
</evidence>
<evidence type="ECO:0007744" key="23">
    <source>
    </source>
</evidence>
<evidence type="ECO:0007829" key="24">
    <source>
        <dbReference type="PDB" id="9B9G"/>
    </source>
</evidence>
<dbReference type="EC" id="2.7.1.67" evidence="5"/>
<dbReference type="EMBL" id="L36151">
    <property type="protein sequence ID" value="AAA56839.1"/>
    <property type="molecule type" value="mRNA"/>
</dbReference>
<dbReference type="EMBL" id="AC007050">
    <property type="status" value="NOT_ANNOTATED_CDS"/>
    <property type="molecule type" value="Genomic_DNA"/>
</dbReference>
<dbReference type="EMBL" id="AC007308">
    <property type="status" value="NOT_ANNOTATED_CDS"/>
    <property type="molecule type" value="Genomic_DNA"/>
</dbReference>
<dbReference type="EMBL" id="AF012872">
    <property type="protein sequence ID" value="AAD13352.1"/>
    <property type="molecule type" value="mRNA"/>
</dbReference>
<dbReference type="EMBL" id="BC018120">
    <property type="protein sequence ID" value="AAH18120.2"/>
    <property type="molecule type" value="mRNA"/>
</dbReference>
<dbReference type="EMBL" id="BC053654">
    <property type="protein sequence ID" value="AAH53654.1"/>
    <property type="molecule type" value="mRNA"/>
</dbReference>
<dbReference type="CCDS" id="CCDS33603.2">
    <molecule id="P42356-1"/>
</dbReference>
<dbReference type="PIR" id="A55404">
    <property type="entry name" value="A55404"/>
</dbReference>
<dbReference type="RefSeq" id="NP_477352.3">
    <molecule id="P42356-1"/>
    <property type="nucleotide sequence ID" value="NM_058004.4"/>
</dbReference>
<dbReference type="RefSeq" id="XP_054181676.1">
    <molecule id="P42356-2"/>
    <property type="nucleotide sequence ID" value="XM_054325701.1"/>
</dbReference>
<dbReference type="PDB" id="6BQ1">
    <property type="method" value="EM"/>
    <property type="resolution" value="3.60 A"/>
    <property type="chains" value="A/E=932-2102"/>
</dbReference>
<dbReference type="PDB" id="9B9G">
    <property type="method" value="EM"/>
    <property type="resolution" value="3.50 A"/>
    <property type="chains" value="A/B=1-2102"/>
</dbReference>
<dbReference type="PDB" id="9BAX">
    <property type="method" value="EM"/>
    <property type="resolution" value="3.65 A"/>
    <property type="chains" value="A/B=1-2102"/>
</dbReference>
<dbReference type="PDBsum" id="6BQ1"/>
<dbReference type="PDBsum" id="9B9G"/>
<dbReference type="PDBsum" id="9BAX"/>
<dbReference type="EMDB" id="EMD-44382"/>
<dbReference type="EMDB" id="EMD-44413"/>
<dbReference type="EMDB" id="EMD-7129"/>
<dbReference type="SMR" id="P42356"/>
<dbReference type="CORUM" id="P42356"/>
<dbReference type="FunCoup" id="P42356">
    <property type="interactions" value="3062"/>
</dbReference>
<dbReference type="IntAct" id="P42356">
    <property type="interactions" value="152"/>
</dbReference>
<dbReference type="MINT" id="P42356"/>
<dbReference type="STRING" id="9606.ENSP00000255882"/>
<dbReference type="BindingDB" id="P42356"/>
<dbReference type="ChEMBL" id="CHEMBL3667"/>
<dbReference type="DrugCentral" id="P42356"/>
<dbReference type="GuidetoPHARMACOLOGY" id="2148"/>
<dbReference type="SwissLipids" id="SLP:000000895"/>
<dbReference type="SwissLipids" id="SLP:000000902">
    <molecule id="P42356-2"/>
</dbReference>
<dbReference type="GlyGen" id="P42356">
    <property type="glycosylation" value="5 sites, 2 N-linked glycans (3 sites), 1 O-linked glycan (1 site)"/>
</dbReference>
<dbReference type="iPTMnet" id="P42356"/>
<dbReference type="MetOSite" id="P42356"/>
<dbReference type="PhosphoSitePlus" id="P42356"/>
<dbReference type="SwissPalm" id="P42356"/>
<dbReference type="BioMuta" id="PI4KA"/>
<dbReference type="DMDM" id="218512114"/>
<dbReference type="CPTAC" id="non-CPTAC-5993"/>
<dbReference type="CPTAC" id="non-CPTAC-5994"/>
<dbReference type="jPOST" id="P42356"/>
<dbReference type="MassIVE" id="P42356"/>
<dbReference type="PaxDb" id="9606-ENSP00000255882"/>
<dbReference type="PeptideAtlas" id="P42356"/>
<dbReference type="ProteomicsDB" id="55512">
    <molecule id="P42356-1"/>
</dbReference>
<dbReference type="ProteomicsDB" id="55513">
    <molecule id="P42356-2"/>
</dbReference>
<dbReference type="Pumba" id="P42356"/>
<dbReference type="Antibodypedia" id="34781">
    <property type="antibodies" value="61 antibodies from 22 providers"/>
</dbReference>
<dbReference type="DNASU" id="5297"/>
<dbReference type="Ensembl" id="ENST00000255882.11">
    <molecule id="P42356-1"/>
    <property type="protein sequence ID" value="ENSP00000255882.6"/>
    <property type="gene ID" value="ENSG00000241973.11"/>
</dbReference>
<dbReference type="GeneID" id="5297"/>
<dbReference type="KEGG" id="hsa:5297"/>
<dbReference type="MANE-Select" id="ENST00000255882.11">
    <property type="protein sequence ID" value="ENSP00000255882.6"/>
    <property type="RefSeq nucleotide sequence ID" value="NM_058004.4"/>
    <property type="RefSeq protein sequence ID" value="NP_477352.3"/>
</dbReference>
<dbReference type="AGR" id="HGNC:8983"/>
<dbReference type="CTD" id="5297"/>
<dbReference type="DisGeNET" id="5297"/>
<dbReference type="GeneCards" id="PI4KA"/>
<dbReference type="GeneReviews" id="PI4KA"/>
<dbReference type="HGNC" id="HGNC:8983">
    <property type="gene designation" value="PI4KA"/>
</dbReference>
<dbReference type="HPA" id="ENSG00000241973">
    <property type="expression patterns" value="Tissue enhanced (brain)"/>
</dbReference>
<dbReference type="MalaCards" id="PI4KA"/>
<dbReference type="MIM" id="600286">
    <property type="type" value="gene"/>
</dbReference>
<dbReference type="MIM" id="616531">
    <property type="type" value="phenotype"/>
</dbReference>
<dbReference type="MIM" id="619621">
    <property type="type" value="phenotype"/>
</dbReference>
<dbReference type="MIM" id="619708">
    <property type="type" value="phenotype"/>
</dbReference>
<dbReference type="neXtProt" id="NX_P42356"/>
<dbReference type="OpenTargets" id="ENSG00000241973"/>
<dbReference type="Orphanet" id="631079">
    <property type="disease" value="Autosomal recessive spastic paraplegia type 84"/>
</dbReference>
<dbReference type="Orphanet" id="98889">
    <property type="disease" value="Bilateral perisylvian polymicrogyria"/>
</dbReference>
<dbReference type="Orphanet" id="436252">
    <property type="disease" value="Combined immunodeficiency-multiple intestinal atresia"/>
</dbReference>
<dbReference type="PharmGKB" id="PA162399305"/>
<dbReference type="VEuPathDB" id="HostDB:ENSG00000241973"/>
<dbReference type="eggNOG" id="KOG0902">
    <property type="taxonomic scope" value="Eukaryota"/>
</dbReference>
<dbReference type="GeneTree" id="ENSGT00550000074798"/>
<dbReference type="InParanoid" id="P42356"/>
<dbReference type="OMA" id="MSQRDEN"/>
<dbReference type="OrthoDB" id="10264149at2759"/>
<dbReference type="PAN-GO" id="P42356">
    <property type="GO annotations" value="5 GO annotations based on evolutionary models"/>
</dbReference>
<dbReference type="PhylomeDB" id="P42356"/>
<dbReference type="TreeFam" id="TF102041"/>
<dbReference type="BioCyc" id="MetaCyc:HS13481-MONOMER"/>
<dbReference type="PathwayCommons" id="P42356"/>
<dbReference type="Reactome" id="R-HSA-1483248">
    <property type="pathway name" value="Synthesis of PIPs at the ER membrane"/>
</dbReference>
<dbReference type="Reactome" id="R-HSA-1660514">
    <property type="pathway name" value="Synthesis of PIPs at the Golgi membrane"/>
</dbReference>
<dbReference type="SABIO-RK" id="P42356"/>
<dbReference type="SignaLink" id="P42356"/>
<dbReference type="SIGNOR" id="P42356"/>
<dbReference type="BioGRID-ORCS" id="5297">
    <property type="hits" value="464 hits in 1177 CRISPR screens"/>
</dbReference>
<dbReference type="ChiTaRS" id="PI4KA">
    <property type="organism name" value="human"/>
</dbReference>
<dbReference type="GeneWiki" id="PI4KA"/>
<dbReference type="GenomeRNAi" id="5297"/>
<dbReference type="Pharos" id="P42356">
    <property type="development level" value="Tchem"/>
</dbReference>
<dbReference type="PRO" id="PR:P42356"/>
<dbReference type="Proteomes" id="UP000005640">
    <property type="component" value="Chromosome 22"/>
</dbReference>
<dbReference type="RNAct" id="P42356">
    <property type="molecule type" value="protein"/>
</dbReference>
<dbReference type="Bgee" id="ENSG00000241973">
    <property type="expression patterns" value="Expressed in superior frontal gyrus and 96 other cell types or tissues"/>
</dbReference>
<dbReference type="ExpressionAtlas" id="P42356">
    <property type="expression patterns" value="baseline and differential"/>
</dbReference>
<dbReference type="GO" id="GO:0005737">
    <property type="term" value="C:cytoplasm"/>
    <property type="evidence" value="ECO:0000314"/>
    <property type="project" value="UniProtKB"/>
</dbReference>
<dbReference type="GO" id="GO:0005829">
    <property type="term" value="C:cytosol"/>
    <property type="evidence" value="ECO:0000304"/>
    <property type="project" value="Reactome"/>
</dbReference>
<dbReference type="GO" id="GO:0070062">
    <property type="term" value="C:extracellular exosome"/>
    <property type="evidence" value="ECO:0007005"/>
    <property type="project" value="UniProtKB"/>
</dbReference>
<dbReference type="GO" id="GO:0005925">
    <property type="term" value="C:focal adhesion"/>
    <property type="evidence" value="ECO:0007005"/>
    <property type="project" value="UniProtKB"/>
</dbReference>
<dbReference type="GO" id="GO:0030660">
    <property type="term" value="C:Golgi-associated vesicle membrane"/>
    <property type="evidence" value="ECO:0000250"/>
    <property type="project" value="UniProtKB"/>
</dbReference>
<dbReference type="GO" id="GO:0016020">
    <property type="term" value="C:membrane"/>
    <property type="evidence" value="ECO:0007005"/>
    <property type="project" value="UniProtKB"/>
</dbReference>
<dbReference type="GO" id="GO:0005886">
    <property type="term" value="C:plasma membrane"/>
    <property type="evidence" value="ECO:0000314"/>
    <property type="project" value="UniProtKB"/>
</dbReference>
<dbReference type="GO" id="GO:0004430">
    <property type="term" value="F:1-phosphatidylinositol 4-kinase activity"/>
    <property type="evidence" value="ECO:0000250"/>
    <property type="project" value="UniProtKB"/>
</dbReference>
<dbReference type="GO" id="GO:0005524">
    <property type="term" value="F:ATP binding"/>
    <property type="evidence" value="ECO:0007669"/>
    <property type="project" value="UniProtKB-KW"/>
</dbReference>
<dbReference type="GO" id="GO:0045296">
    <property type="term" value="F:cadherin binding"/>
    <property type="evidence" value="ECO:0007005"/>
    <property type="project" value="BHF-UCL"/>
</dbReference>
<dbReference type="GO" id="GO:0044788">
    <property type="term" value="P:modulation by host of viral process"/>
    <property type="evidence" value="ECO:0000315"/>
    <property type="project" value="ParkinsonsUK-UCL"/>
</dbReference>
<dbReference type="GO" id="GO:0006661">
    <property type="term" value="P:phosphatidylinositol biosynthetic process"/>
    <property type="evidence" value="ECO:0000304"/>
    <property type="project" value="Reactome"/>
</dbReference>
<dbReference type="GO" id="GO:0046854">
    <property type="term" value="P:phosphatidylinositol phosphate biosynthetic process"/>
    <property type="evidence" value="ECO:0000250"/>
    <property type="project" value="UniProtKB"/>
</dbReference>
<dbReference type="GO" id="GO:0048015">
    <property type="term" value="P:phosphatidylinositol-mediated signaling"/>
    <property type="evidence" value="ECO:0000318"/>
    <property type="project" value="GO_Central"/>
</dbReference>
<dbReference type="GO" id="GO:0140754">
    <property type="term" value="P:reorganization of cellular membranes to establish viral sites of replication"/>
    <property type="evidence" value="ECO:0000315"/>
    <property type="project" value="ParkinsonsUK-UCL"/>
</dbReference>
<dbReference type="GO" id="GO:0007165">
    <property type="term" value="P:signal transduction"/>
    <property type="evidence" value="ECO:0000303"/>
    <property type="project" value="ProtInc"/>
</dbReference>
<dbReference type="CDD" id="cd00871">
    <property type="entry name" value="PI4Ka"/>
    <property type="match status" value="1"/>
</dbReference>
<dbReference type="CDD" id="cd05167">
    <property type="entry name" value="PI4Kc_III_alpha"/>
    <property type="match status" value="1"/>
</dbReference>
<dbReference type="FunFam" id="1.10.1070.11:FF:000005">
    <property type="entry name" value="Phosphatidylinositol 4-kinase, catalytic, alpha"/>
    <property type="match status" value="1"/>
</dbReference>
<dbReference type="FunFam" id="1.25.40.70:FF:000002">
    <property type="entry name" value="Phosphatidylinositol 4-kinase, catalytic, alpha"/>
    <property type="match status" value="1"/>
</dbReference>
<dbReference type="FunFam" id="3.30.1010.10:FF:000009">
    <property type="entry name" value="Phosphatidylinositol 4-kinase, catalytic, alpha"/>
    <property type="match status" value="1"/>
</dbReference>
<dbReference type="Gene3D" id="1.10.1070.11">
    <property type="entry name" value="Phosphatidylinositol 3-/4-kinase, catalytic domain"/>
    <property type="match status" value="1"/>
</dbReference>
<dbReference type="Gene3D" id="3.30.1010.10">
    <property type="entry name" value="Phosphatidylinositol 3-kinase Catalytic Subunit, Chain A, domain 4"/>
    <property type="match status" value="1"/>
</dbReference>
<dbReference type="Gene3D" id="1.25.40.70">
    <property type="entry name" value="Phosphatidylinositol 3-kinase, accessory domain (PIK)"/>
    <property type="match status" value="1"/>
</dbReference>
<dbReference type="InterPro" id="IPR016024">
    <property type="entry name" value="ARM-type_fold"/>
</dbReference>
<dbReference type="InterPro" id="IPR011009">
    <property type="entry name" value="Kinase-like_dom_sf"/>
</dbReference>
<dbReference type="InterPro" id="IPR000403">
    <property type="entry name" value="PI3/4_kinase_cat_dom"/>
</dbReference>
<dbReference type="InterPro" id="IPR036940">
    <property type="entry name" value="PI3/4_kinase_cat_sf"/>
</dbReference>
<dbReference type="InterPro" id="IPR018936">
    <property type="entry name" value="PI3/4_kinase_CS"/>
</dbReference>
<dbReference type="InterPro" id="IPR001263">
    <property type="entry name" value="PI3K_accessory_dom"/>
</dbReference>
<dbReference type="InterPro" id="IPR042236">
    <property type="entry name" value="PI3K_accessory_sf"/>
</dbReference>
<dbReference type="InterPro" id="IPR045495">
    <property type="entry name" value="PI4K_N"/>
</dbReference>
<dbReference type="InterPro" id="IPR015433">
    <property type="entry name" value="PI_Kinase"/>
</dbReference>
<dbReference type="PANTHER" id="PTHR10048:SF15">
    <property type="entry name" value="PHOSPHATIDYLINOSITOL 4-KINASE ALPHA"/>
    <property type="match status" value="1"/>
</dbReference>
<dbReference type="PANTHER" id="PTHR10048">
    <property type="entry name" value="PHOSPHATIDYLINOSITOL KINASE"/>
    <property type="match status" value="1"/>
</dbReference>
<dbReference type="Pfam" id="PF00454">
    <property type="entry name" value="PI3_PI4_kinase"/>
    <property type="match status" value="1"/>
</dbReference>
<dbReference type="Pfam" id="PF00613">
    <property type="entry name" value="PI3Ka"/>
    <property type="match status" value="1"/>
</dbReference>
<dbReference type="Pfam" id="PF19274">
    <property type="entry name" value="PI4K_N"/>
    <property type="match status" value="1"/>
</dbReference>
<dbReference type="SMART" id="SM00145">
    <property type="entry name" value="PI3Ka"/>
    <property type="match status" value="1"/>
</dbReference>
<dbReference type="SMART" id="SM00146">
    <property type="entry name" value="PI3Kc"/>
    <property type="match status" value="1"/>
</dbReference>
<dbReference type="SUPFAM" id="SSF48371">
    <property type="entry name" value="ARM repeat"/>
    <property type="match status" value="2"/>
</dbReference>
<dbReference type="SUPFAM" id="SSF56112">
    <property type="entry name" value="Protein kinase-like (PK-like)"/>
    <property type="match status" value="1"/>
</dbReference>
<dbReference type="PROSITE" id="PS00915">
    <property type="entry name" value="PI3_4_KINASE_1"/>
    <property type="match status" value="1"/>
</dbReference>
<dbReference type="PROSITE" id="PS00916">
    <property type="entry name" value="PI3_4_KINASE_2"/>
    <property type="match status" value="1"/>
</dbReference>
<dbReference type="PROSITE" id="PS50290">
    <property type="entry name" value="PI3_4_KINASE_3"/>
    <property type="match status" value="1"/>
</dbReference>
<dbReference type="PROSITE" id="PS51545">
    <property type="entry name" value="PIK_HELICAL"/>
    <property type="match status" value="1"/>
</dbReference>
<proteinExistence type="evidence at protein level"/>
<reference key="1">
    <citation type="journal article" date="1994" name="J. Biol. Chem.">
        <title>Cloning and characterization of a human phosphatidylinositol 4-kinase.</title>
        <authorList>
            <person name="Wong K."/>
            <person name="Cantley L.C."/>
        </authorList>
    </citation>
    <scope>NUCLEOTIDE SEQUENCE [MRNA] (ISOFORM 2)</scope>
    <scope>TISSUE SPECIFICITY</scope>
    <scope>ACTIVITY REGULATION</scope>
</reference>
<reference key="2">
    <citation type="journal article" date="1999" name="Nature">
        <title>The DNA sequence of human chromosome 22.</title>
        <authorList>
            <person name="Dunham I."/>
            <person name="Hunt A.R."/>
            <person name="Collins J.E."/>
            <person name="Bruskiewich R."/>
            <person name="Beare D.M."/>
            <person name="Clamp M."/>
            <person name="Smink L.J."/>
            <person name="Ainscough R."/>
            <person name="Almeida J.P."/>
            <person name="Babbage A.K."/>
            <person name="Bagguley C."/>
            <person name="Bailey J."/>
            <person name="Barlow K.F."/>
            <person name="Bates K.N."/>
            <person name="Beasley O.P."/>
            <person name="Bird C.P."/>
            <person name="Blakey S.E."/>
            <person name="Bridgeman A.M."/>
            <person name="Buck D."/>
            <person name="Burgess J."/>
            <person name="Burrill W.D."/>
            <person name="Burton J."/>
            <person name="Carder C."/>
            <person name="Carter N.P."/>
            <person name="Chen Y."/>
            <person name="Clark G."/>
            <person name="Clegg S.M."/>
            <person name="Cobley V.E."/>
            <person name="Cole C.G."/>
            <person name="Collier R.E."/>
            <person name="Connor R."/>
            <person name="Conroy D."/>
            <person name="Corby N.R."/>
            <person name="Coville G.J."/>
            <person name="Cox A.V."/>
            <person name="Davis J."/>
            <person name="Dawson E."/>
            <person name="Dhami P.D."/>
            <person name="Dockree C."/>
            <person name="Dodsworth S.J."/>
            <person name="Durbin R.M."/>
            <person name="Ellington A.G."/>
            <person name="Evans K.L."/>
            <person name="Fey J.M."/>
            <person name="Fleming K."/>
            <person name="French L."/>
            <person name="Garner A.A."/>
            <person name="Gilbert J.G.R."/>
            <person name="Goward M.E."/>
            <person name="Grafham D.V."/>
            <person name="Griffiths M.N.D."/>
            <person name="Hall C."/>
            <person name="Hall R.E."/>
            <person name="Hall-Tamlyn G."/>
            <person name="Heathcott R.W."/>
            <person name="Ho S."/>
            <person name="Holmes S."/>
            <person name="Hunt S.E."/>
            <person name="Jones M.C."/>
            <person name="Kershaw J."/>
            <person name="Kimberley A.M."/>
            <person name="King A."/>
            <person name="Laird G.K."/>
            <person name="Langford C.F."/>
            <person name="Leversha M.A."/>
            <person name="Lloyd C."/>
            <person name="Lloyd D.M."/>
            <person name="Martyn I.D."/>
            <person name="Mashreghi-Mohammadi M."/>
            <person name="Matthews L.H."/>
            <person name="Mccann O.T."/>
            <person name="Mcclay J."/>
            <person name="Mclaren S."/>
            <person name="McMurray A.A."/>
            <person name="Milne S.A."/>
            <person name="Mortimore B.J."/>
            <person name="Odell C.N."/>
            <person name="Pavitt R."/>
            <person name="Pearce A.V."/>
            <person name="Pearson D."/>
            <person name="Phillimore B.J.C.T."/>
            <person name="Phillips S.H."/>
            <person name="Plumb R.W."/>
            <person name="Ramsay H."/>
            <person name="Ramsey Y."/>
            <person name="Rogers L."/>
            <person name="Ross M.T."/>
            <person name="Scott C.E."/>
            <person name="Sehra H.K."/>
            <person name="Skuce C.D."/>
            <person name="Smalley S."/>
            <person name="Smith M.L."/>
            <person name="Soderlund C."/>
            <person name="Spragon L."/>
            <person name="Steward C.A."/>
            <person name="Sulston J.E."/>
            <person name="Swann R.M."/>
            <person name="Vaudin M."/>
            <person name="Wall M."/>
            <person name="Wallis J.M."/>
            <person name="Whiteley M.N."/>
            <person name="Willey D.L."/>
            <person name="Williams L."/>
            <person name="Williams S.A."/>
            <person name="Williamson H."/>
            <person name="Wilmer T.E."/>
            <person name="Wilming L."/>
            <person name="Wright C.L."/>
            <person name="Hubbard T."/>
            <person name="Bentley D.R."/>
            <person name="Beck S."/>
            <person name="Rogers J."/>
            <person name="Shimizu N."/>
            <person name="Minoshima S."/>
            <person name="Kawasaki K."/>
            <person name="Sasaki T."/>
            <person name="Asakawa S."/>
            <person name="Kudoh J."/>
            <person name="Shintani A."/>
            <person name="Shibuya K."/>
            <person name="Yoshizaki Y."/>
            <person name="Aoki N."/>
            <person name="Mitsuyama S."/>
            <person name="Roe B.A."/>
            <person name="Chen F."/>
            <person name="Chu L."/>
            <person name="Crabtree J."/>
            <person name="Deschamps S."/>
            <person name="Do A."/>
            <person name="Do T."/>
            <person name="Dorman A."/>
            <person name="Fang F."/>
            <person name="Fu Y."/>
            <person name="Hu P."/>
            <person name="Hua A."/>
            <person name="Kenton S."/>
            <person name="Lai H."/>
            <person name="Lao H.I."/>
            <person name="Lewis J."/>
            <person name="Lewis S."/>
            <person name="Lin S.-P."/>
            <person name="Loh P."/>
            <person name="Malaj E."/>
            <person name="Nguyen T."/>
            <person name="Pan H."/>
            <person name="Phan S."/>
            <person name="Qi S."/>
            <person name="Qian Y."/>
            <person name="Ray L."/>
            <person name="Ren Q."/>
            <person name="Shaull S."/>
            <person name="Sloan D."/>
            <person name="Song L."/>
            <person name="Wang Q."/>
            <person name="Wang Y."/>
            <person name="Wang Z."/>
            <person name="White J."/>
            <person name="Willingham D."/>
            <person name="Wu H."/>
            <person name="Yao Z."/>
            <person name="Zhan M."/>
            <person name="Zhang G."/>
            <person name="Chissoe S."/>
            <person name="Murray J."/>
            <person name="Miller N."/>
            <person name="Minx P."/>
            <person name="Fulton R."/>
            <person name="Johnson D."/>
            <person name="Bemis G."/>
            <person name="Bentley D."/>
            <person name="Bradshaw H."/>
            <person name="Bourne S."/>
            <person name="Cordes M."/>
            <person name="Du Z."/>
            <person name="Fulton L."/>
            <person name="Goela D."/>
            <person name="Graves T."/>
            <person name="Hawkins J."/>
            <person name="Hinds K."/>
            <person name="Kemp K."/>
            <person name="Latreille P."/>
            <person name="Layman D."/>
            <person name="Ozersky P."/>
            <person name="Rohlfing T."/>
            <person name="Scheet P."/>
            <person name="Walker C."/>
            <person name="Wamsley A."/>
            <person name="Wohldmann P."/>
            <person name="Pepin K."/>
            <person name="Nelson J."/>
            <person name="Korf I."/>
            <person name="Bedell J.A."/>
            <person name="Hillier L.W."/>
            <person name="Mardis E."/>
            <person name="Waterston R."/>
            <person name="Wilson R."/>
            <person name="Emanuel B.S."/>
            <person name="Shaikh T."/>
            <person name="Kurahashi H."/>
            <person name="Saitta S."/>
            <person name="Budarf M.L."/>
            <person name="McDermid H.E."/>
            <person name="Johnson A."/>
            <person name="Wong A.C.C."/>
            <person name="Morrow B.E."/>
            <person name="Edelmann L."/>
            <person name="Kim U.J."/>
            <person name="Shizuya H."/>
            <person name="Simon M.I."/>
            <person name="Dumanski J.P."/>
            <person name="Peyrard M."/>
            <person name="Kedra D."/>
            <person name="Seroussi E."/>
            <person name="Fransson I."/>
            <person name="Tapia I."/>
            <person name="Bruder C.E."/>
            <person name="O'Brien K.P."/>
            <person name="Wilkinson P."/>
            <person name="Bodenteich A."/>
            <person name="Hartman K."/>
            <person name="Hu X."/>
            <person name="Khan A.S."/>
            <person name="Lane L."/>
            <person name="Tilahun Y."/>
            <person name="Wright H."/>
        </authorList>
    </citation>
    <scope>NUCLEOTIDE SEQUENCE [LARGE SCALE GENOMIC DNA]</scope>
</reference>
<reference key="3">
    <citation type="journal article" date="1999" name="Biochim. Biophys. Acta">
        <title>Functional expression and characterisation of a new human phosphatidylinositol 4-kinase PI4K230.</title>
        <authorList>
            <person name="Gehrmann T."/>
            <person name="Guelkan H."/>
            <person name="Suer S."/>
            <person name="Herberg F.W."/>
            <person name="Balla A."/>
            <person name="Vereb G. Jr."/>
            <person name="Mayr G.W."/>
            <person name="Heilmeyer L.M.G. Jr."/>
        </authorList>
    </citation>
    <scope>NUCLEOTIDE SEQUENCE [MRNA] OF 59-2102 (ISOFORM 1)</scope>
    <scope>FUNCTION</scope>
    <scope>CATALYTIC ACTIVITY</scope>
    <scope>BIOPHYSICOCHEMICAL PROPERTIES</scope>
    <scope>TISSUE SPECIFICITY</scope>
</reference>
<reference key="4">
    <citation type="journal article" date="2004" name="Genome Res.">
        <title>The status, quality, and expansion of the NIH full-length cDNA project: the Mammalian Gene Collection (MGC).</title>
        <authorList>
            <consortium name="The MGC Project Team"/>
        </authorList>
    </citation>
    <scope>NUCLEOTIDE SEQUENCE [LARGE SCALE MRNA] OF 1200-2102 (ISOFORM 1)</scope>
    <source>
        <tissue>Uterus</tissue>
    </source>
</reference>
<reference key="5">
    <citation type="journal article" date="2008" name="Mol. Cell">
        <title>Kinase-selective enrichment enables quantitative phosphoproteomics of the kinome across the cell cycle.</title>
        <authorList>
            <person name="Daub H."/>
            <person name="Olsen J.V."/>
            <person name="Bairlein M."/>
            <person name="Gnad F."/>
            <person name="Oppermann F.S."/>
            <person name="Korner R."/>
            <person name="Greff Z."/>
            <person name="Keri G."/>
            <person name="Stemmann O."/>
            <person name="Mann M."/>
        </authorList>
    </citation>
    <scope>PHOSPHORYLATION [LARGE SCALE ANALYSIS] AT SER-265</scope>
    <scope>IDENTIFICATION BY MASS SPECTROMETRY [LARGE SCALE ANALYSIS]</scope>
    <source>
        <tissue>Cervix carcinoma</tissue>
    </source>
</reference>
<reference key="6">
    <citation type="journal article" date="2008" name="Proc. Natl. Acad. Sci. U.S.A.">
        <title>A quantitative atlas of mitotic phosphorylation.</title>
        <authorList>
            <person name="Dephoure N."/>
            <person name="Zhou C."/>
            <person name="Villen J."/>
            <person name="Beausoleil S.A."/>
            <person name="Bakalarski C.E."/>
            <person name="Elledge S.J."/>
            <person name="Gygi S.P."/>
        </authorList>
    </citation>
    <scope>PHOSPHORYLATION [LARGE SCALE ANALYSIS] AT SER-257; SER-260; SER-262 AND SER-265</scope>
    <scope>IDENTIFICATION BY MASS SPECTROMETRY [LARGE SCALE ANALYSIS]</scope>
    <source>
        <tissue>Cervix carcinoma</tissue>
    </source>
</reference>
<reference key="7">
    <citation type="journal article" date="2009" name="Mol. Cell. Proteomics">
        <title>Large-scale proteomics analysis of the human kinome.</title>
        <authorList>
            <person name="Oppermann F.S."/>
            <person name="Gnad F."/>
            <person name="Olsen J.V."/>
            <person name="Hornberger R."/>
            <person name="Greff Z."/>
            <person name="Keri G."/>
            <person name="Mann M."/>
            <person name="Daub H."/>
        </authorList>
    </citation>
    <scope>IDENTIFICATION BY MASS SPECTROMETRY [LARGE SCALE ANALYSIS]</scope>
</reference>
<reference key="8">
    <citation type="journal article" date="2009" name="Sci. Signal.">
        <title>Quantitative phosphoproteomic analysis of T cell receptor signaling reveals system-wide modulation of protein-protein interactions.</title>
        <authorList>
            <person name="Mayya V."/>
            <person name="Lundgren D.H."/>
            <person name="Hwang S.-I."/>
            <person name="Rezaul K."/>
            <person name="Wu L."/>
            <person name="Eng J.K."/>
            <person name="Rodionov V."/>
            <person name="Han D.K."/>
        </authorList>
    </citation>
    <scope>PHOSPHORYLATION [LARGE SCALE ANALYSIS] AT SER-265 AND SER-1436</scope>
    <scope>IDENTIFICATION BY MASS SPECTROMETRY [LARGE SCALE ANALYSIS]</scope>
    <source>
        <tissue>Leukemic T-cell</tissue>
    </source>
</reference>
<reference key="9">
    <citation type="journal article" date="2011" name="BMC Syst. Biol.">
        <title>Initial characterization of the human central proteome.</title>
        <authorList>
            <person name="Burkard T.R."/>
            <person name="Planyavsky M."/>
            <person name="Kaupe I."/>
            <person name="Breitwieser F.P."/>
            <person name="Buerckstuemmer T."/>
            <person name="Bennett K.L."/>
            <person name="Superti-Furga G."/>
            <person name="Colinge J."/>
        </authorList>
    </citation>
    <scope>IDENTIFICATION BY MASS SPECTROMETRY [LARGE SCALE ANALYSIS]</scope>
</reference>
<reference key="10">
    <citation type="journal article" date="2012" name="J. Cell Biol.">
        <title>PtdIns4P synthesis by PI4KIIIalpha at the plasma membrane and its impact on plasma membrane identity.</title>
        <authorList>
            <person name="Nakatsu F."/>
            <person name="Baskin J.M."/>
            <person name="Chung J."/>
            <person name="Tanner L.B."/>
            <person name="Shui G."/>
            <person name="Lee S.Y."/>
            <person name="Pirruccello M."/>
            <person name="Hao M."/>
            <person name="Ingolia N.T."/>
            <person name="Wenk M.R."/>
            <person name="De Camilli P."/>
        </authorList>
    </citation>
    <scope>GENE STRUCTURE</scope>
    <scope>FUNCTION</scope>
    <scope>SUBCELLULAR LOCATION</scope>
    <scope>IDENTIFICATION IN THE PI4K COMPLEX</scope>
    <scope>ACTIVITY REGULATION</scope>
</reference>
<reference key="11">
    <citation type="journal article" date="2013" name="J. Proteome Res.">
        <title>Toward a comprehensive characterization of a human cancer cell phosphoproteome.</title>
        <authorList>
            <person name="Zhou H."/>
            <person name="Di Palma S."/>
            <person name="Preisinger C."/>
            <person name="Peng M."/>
            <person name="Polat A.N."/>
            <person name="Heck A.J."/>
            <person name="Mohammed S."/>
        </authorList>
    </citation>
    <scope>PHOSPHORYLATION [LARGE SCALE ANALYSIS] AT SER-230; SER-256; SER-257; SER-262; SER-265; SER-429; TYR-1154 AND SER-1436</scope>
    <scope>IDENTIFICATION BY MASS SPECTROMETRY [LARGE SCALE ANALYSIS]</scope>
    <source>
        <tissue>Cervix carcinoma</tissue>
        <tissue>Erythroleukemia</tissue>
    </source>
</reference>
<reference key="12">
    <citation type="journal article" date="2014" name="Gastroenterology">
        <title>Mutations in tetratricopeptide repeat domain 7A result in a severe form of very early onset inflammatory bowel disease.</title>
        <authorList>
            <person name="Avitzur Y."/>
            <person name="Guo C."/>
            <person name="Mastropaolo L.A."/>
            <person name="Bahrami E."/>
            <person name="Chen H."/>
            <person name="Zhao Z."/>
            <person name="Elkadri A."/>
            <person name="Dhillon S."/>
            <person name="Murchie R."/>
            <person name="Fattouh R."/>
            <person name="Huynh H."/>
            <person name="Walker J.L."/>
            <person name="Wales P.W."/>
            <person name="Cutz E."/>
            <person name="Kakuta Y."/>
            <person name="Dudley J."/>
            <person name="Kammermeier J."/>
            <person name="Powrie F."/>
            <person name="Shah N."/>
            <person name="Walz C."/>
            <person name="Nathrath M."/>
            <person name="Kotlarz D."/>
            <person name="Puchaka J."/>
            <person name="Krieger J.R."/>
            <person name="Racek T."/>
            <person name="Kirchner T."/>
            <person name="Walters T.D."/>
            <person name="Brumell J.H."/>
            <person name="Griffiths A.M."/>
            <person name="Rezaei N."/>
            <person name="Rashtian P."/>
            <person name="Najafi M."/>
            <person name="Monajemzadeh M."/>
            <person name="Pelsue S."/>
            <person name="McGovern D.P."/>
            <person name="Uhlig H.H."/>
            <person name="Schadt E."/>
            <person name="Klein C."/>
            <person name="Snapper S.B."/>
            <person name="Muise A.M."/>
        </authorList>
    </citation>
    <scope>SUBCELLULAR LOCATION</scope>
    <scope>INTERACTION WITH TTC7A</scope>
</reference>
<reference key="13">
    <citation type="journal article" date="2014" name="J. Proteomics">
        <title>An enzyme assisted RP-RPLC approach for in-depth analysis of human liver phosphoproteome.</title>
        <authorList>
            <person name="Bian Y."/>
            <person name="Song C."/>
            <person name="Cheng K."/>
            <person name="Dong M."/>
            <person name="Wang F."/>
            <person name="Huang J."/>
            <person name="Sun D."/>
            <person name="Wang L."/>
            <person name="Ye M."/>
            <person name="Zou H."/>
        </authorList>
    </citation>
    <scope>PHOSPHORYLATION [LARGE SCALE ANALYSIS] AT SER-1436</scope>
    <scope>IDENTIFICATION BY MASS SPECTROMETRY [LARGE SCALE ANALYSIS]</scope>
    <source>
        <tissue>Liver</tissue>
    </source>
</reference>
<reference key="14">
    <citation type="journal article" date="2015" name="Hum. Mol. Genet.">
        <title>Germline recessive mutations in PI4KA are associated with perisylvian polymicrogyria, cerebellar hypoplasia and arthrogryposis.</title>
        <authorList>
            <person name="Pagnamenta A.T."/>
            <person name="Howard M.F."/>
            <person name="Wisniewski E."/>
            <person name="Popitsch N."/>
            <person name="Knight S.J."/>
            <person name="Keays D.A."/>
            <person name="Quaghebeur G."/>
            <person name="Cox H."/>
            <person name="Cox P."/>
            <person name="Balla T."/>
            <person name="Taylor J.C."/>
            <person name="Kini U."/>
        </authorList>
    </citation>
    <scope>INVOLVEMENT IN NEDSPLB</scope>
    <scope>VARIANTS NEDSPLB 796-ARG--TYR-2102 DEL AND ASN-1854</scope>
    <scope>CHARACTERIZATION OF VARIANT NEDSPLB ASN-1854</scope>
</reference>
<reference key="15">
    <citation type="journal article" date="2015" name="EMBO Rep.">
        <title>Plasticity of PI4KIIIalpha interactions at the plasma membrane.</title>
        <authorList>
            <person name="Chung J."/>
            <person name="Nakatsu F."/>
            <person name="Baskin J.M."/>
            <person name="De Camilli P."/>
        </authorList>
    </citation>
    <scope>INTERACTION WITH TMEM150A</scope>
    <scope>SUBCELLULAR LOCATION</scope>
    <scope>ACTIVITY REGULATION</scope>
</reference>
<reference key="16">
    <citation type="journal article" date="2016" name="Nat. Cell Biol.">
        <title>The leukodystrophy protein FAM126A (hyccin) regulates PtdIns(4)P synthesis at the plasma membrane.</title>
        <authorList>
            <person name="Baskin J.M."/>
            <person name="Wu X."/>
            <person name="Christiano R."/>
            <person name="Oh M.S."/>
            <person name="Schauder C.M."/>
            <person name="Gazzerro E."/>
            <person name="Messa M."/>
            <person name="Baldassari S."/>
            <person name="Assereto S."/>
            <person name="Biancheri R."/>
            <person name="Zara F."/>
            <person name="Minetti C."/>
            <person name="Raimondi A."/>
            <person name="Simons M."/>
            <person name="Walther T.C."/>
            <person name="Reinisch K.M."/>
            <person name="De Camilli P."/>
        </authorList>
    </citation>
    <scope>IDENTIFICATION IN THE PI4K COMPLEX</scope>
    <scope>ACTIVITY REGULATION</scope>
</reference>
<reference key="17">
    <citation type="journal article" date="2017" name="J. Virol.">
        <title>Hepatitis C Virus Subverts Human Choline Kinase-alpha To Bridge Phosphatidylinositol-4-Kinase IIIalpha (PI4KIIIalpha) and NS5A and Upregulates PI4KIIIalpha Activation, Thereby Promoting the Translocation of the Ternary Complex to the Endoplasmic Reticulum for Viral Replication.</title>
        <authorList>
            <person name="Wong M.T."/>
            <person name="Chen S.S."/>
        </authorList>
    </citation>
    <scope>IDENTIFICATION IN A COMPLEX WITH CHKA AND HCV NON-STRUCTURAL PROTEIN 5A (MICROBIAL INFECTION)</scope>
</reference>
<reference key="18">
    <citation type="journal article" date="2021" name="Brain">
        <title>Biallelic PI4KA variants cause a novel neurodevelopmental syndrome with hypomyelinating leukodystrophy.</title>
        <authorList>
            <person name="Verdura E."/>
            <person name="Rodriguez-Palmero A."/>
            <person name="Velez-Santamaria V."/>
            <person name="Planas-Serra L."/>
            <person name="de la Calle I."/>
            <person name="Raspall-Chaure M."/>
            <person name="Roubertie A."/>
            <person name="Benkirane M."/>
            <person name="Saettini F."/>
            <person name="Pavinato L."/>
            <person name="Mandrile G."/>
            <person name="O'Leary M."/>
            <person name="O'Heir E."/>
            <person name="Barredo E."/>
            <person name="Chacon A."/>
            <person name="Michaud V."/>
            <person name="Goizet C."/>
            <person name="Ruiz M."/>
            <person name="Schlueter A."/>
            <person name="Rouvet I."/>
            <person name="Sala-Coromina J."/>
            <person name="Fossati C."/>
            <person name="Iascone M."/>
            <person name="Canonico F."/>
            <person name="Marce-Grau A."/>
            <person name="de Souza P."/>
            <person name="Adams D.R."/>
            <person name="Casasnovas C."/>
            <person name="Rehm H.L."/>
            <person name="Mefford H.C."/>
            <person name="Gonzalez Gutierrez-Solana L."/>
            <person name="Brusco A."/>
            <person name="Koenig M."/>
            <person name="Macaya A."/>
            <person name="Pujol A."/>
        </authorList>
    </citation>
    <scope>VARIANTS NEDSPLB TRP-119; ARG-472; 618-ARG--TYR-2102 DEL; LYS-1152; THR-1198; ARG-1295; ASN-1664; ASN-1854; ARG-1925; SER-1987 AND THR-2041</scope>
    <scope>VARIANTS SPG84 MET-1556; ILE-1720 AND GLU-1820 DEL</scope>
    <scope>INVOLVEMENT IN NEDSPLB</scope>
    <scope>INVOLVEMENT IN SPG84</scope>
</reference>
<reference key="19">
    <citation type="journal article" date="2021" name="Brain">
        <title>Biallelic PI4KA variants cause neurological, intestinal and immunological disease.</title>
        <authorList>
            <person name="Salter C.G."/>
            <person name="Cai Y."/>
            <person name="Lo B."/>
            <person name="Helman G."/>
            <person name="Taylor H."/>
            <person name="McCartney A."/>
            <person name="Leslie J.S."/>
            <person name="Accogli A."/>
            <person name="Zara F."/>
            <person name="Traverso M."/>
            <person name="Fasham J."/>
            <person name="Lees J.A."/>
            <person name="Ferla M.P."/>
            <person name="Chioza B.A."/>
            <person name="Wenger O."/>
            <person name="Scott E."/>
            <person name="Cross H.E."/>
            <person name="Crawford J."/>
            <person name="Warshawsky I."/>
            <person name="Keisling M."/>
            <person name="Agamanolis D."/>
            <person name="Ward Melver C."/>
            <person name="Cox H."/>
            <person name="Elawad M."/>
            <person name="Marton T."/>
            <person name="Wakeling M.N."/>
            <person name="Holzinger D."/>
            <person name="Tippelt S."/>
            <person name="Munteanu M."/>
            <person name="Valcheva D."/>
            <person name="Deal C."/>
            <person name="Van Meerbeke S."/>
            <person name="Walsh Vockley C."/>
            <person name="Butte M.J."/>
            <person name="Acar U."/>
            <person name="van der Knaap M.S."/>
            <person name="Korenke G.C."/>
            <person name="Kotzaeridou U."/>
            <person name="Balla T."/>
            <person name="Simons C."/>
            <person name="Uhlig H.H."/>
            <person name="Crosby A.H."/>
            <person name="De Camilli P."/>
            <person name="Wolf N.I."/>
            <person name="Baple E.L."/>
        </authorList>
    </citation>
    <scope>VARIANTS NEDSPLB 566-ARG--TYR-2102 DEL; PRO-777; 1191-GLN--TYR-2102 DEL; TRP-1733; THR-1808; ASN-1854; GLU-1925 AND CYS-1937</scope>
    <scope>VARIANT GIDID2 ASP-1623</scope>
    <scope>CHARACTERIZATION OF VARIANT GIDID2 ASP-1623</scope>
    <scope>INTERACTION WITH TTC7A</scope>
    <scope>INVOLVEMENT IN NEDSPLB</scope>
    <scope>INVOLVEMENT IN GIDID2</scope>
    <scope>MUTAGENESIS OF ASP-1957</scope>
</reference>
<sequence>MAAAPARGGGGGGGGGGGCSGSGSSASRGFYFNTVLSLARSLAVQRPASLEKVQKLLCMCPVDFHGIFQLDERRRDAVIALGIFLIESDLQHKDCVVPYLLRLLKGLPKVYWVEESTARKGRGALPVAESFSFCLVTLLSDVAYRDPSLRDEILEVLLQVLHVLLGMCQALEIQDKEYLCKYAIPCLIGISRAFGRYSNMEESLLSKLFPKIPPHSLRVLEELEGVRRRSFNDFRSILPSNLLTVCQEGTLKRKTSSVSSISQVSPERGMPPPSSPGGSAFHYFEASCLPDGTALEPEYYFSTISSSFSVSPLFNGVTYKEFNIPLEMLRELLNLVKKIVEEAVLKSLDAIVASVMEANPSADLYYTSFSDPLYLTMFKMLRDTLYYMKDLPTSFVKEIHDFVLEQFNTSQGELQKILHDADRIHNELSPLKLRCQANAACVDLMVWAVKDEQGAENLCIKLSEKLQSKTSSKVIIAHLPLLICCLQGLGRLCERFPVVVHSVTPSLRDFLVIPSPVLVKLYKYHSQYHTVAGNDIKISVTNEHSESTLNVMSGKKSQPSMYEQLRDIAIDNICRCLKAGLTVDPVIVEAFLASLSNRLYISQESDKDAHLIPDHTIRALGHIAVALRDTPKVMEPILQILQQKFCQPPSPLDVLIIDQLGCLVITGNQYIYQEVWNLFQQISVKASSVVYSATKDYKDHGYRHCSLAVINALANIAANIQDEHLVDELLMNLLELFVQLGLEGKRASERASEKGPALKASSSAGNLGVLIPVIAVLTRRLPPIKEAKPRLQKLFRDFWLYSVLMGFAVEGSGLWPEEWYEGVCEIATKSPLLTFPSKEPLRSVLQYNSAMKNDTVTPAELSELRSTIINLLDPPPEVSALINKLDFAMSTYLLSVYRLEYMRVLRSTDPDRFQVMFCYFEDKAIQKDKSGMMQCVIAVADKVFDAFLNMMADKAKTKENEEELERHAQFLLVNFNHIHKRIRRVADKYLSGLVDKFPHLLWSGTVLKTMLDILQTLSLSLSADIHKDQPYYDIPDAPYRITVPDTYEARESIVKDFAARCGMILQEAMKWAPTVTKSHLQEYLNKHQNWVSGLSQHTGLAMATESILHFAGYNKQNTTLGATQLSERPACVKKDYSNFMASLNLRNRYAGEVYGMIRFSGTTGQMSDLNKMMVQDLHSALDRSHPQHYTQAMFKLTAMLISSKDCDPQLLHHLCWGPLRMFNEHGMETALACWEWLLAGKDGVEVPFMREMAGAWHMTVEQKFGLFSAEIKEADPLAASEASQPKPCPPEVTPHYIWIDFLVQRFEIAKYCSSDQVEIFSSLLQRSMSLNIGGAKGSMNRHVAAIGPRFKLLTLGLSLLHADVVPNATIRNVLREKIYSTAFDYFSCPPKFPTQGEKRLREDISIMIKFWTAMFSDKKYLTASQLVPPDNQDTRSNLDITVGSRQQATQGWINTYPLSSGMSTISKKSGMSKKTNRGSQLHKYYMKRRTLLLSLLATEIERLITWYNPLSAPELELDQAGENSVANWRSKYISLSEKQWKDNVNLAWSISPYLAVQLPARFKNTEAIGNEVTRLVRLDPGAVSDVPEAIKFLVTWHTIDADAPELSHVLCWAPTDPPTGLSYFSSMYPPHPLTAQYGVKVLRSFPPDAILFYIPQIVQALRYDKMGYVREYILWAASKSQLLAHQFIWNMKTNIYLDEEGHQKDPDIGDLLDQLVEEITGSLSGPAKDFYQREFDFFNKITNVSAIIKPYPKGDERKKACLSALSEVKVQPGCYLPSNPEAIVLDIDYKSGTPMQSAAKAPYLAKFKVKRCGVSELEKEGLRCRSDSEDECSTQEADGQKISWQAAIFKVGDDCRQDMLALQIIDLFKNIFQLVGLDLFVFPYRVVATAPGCGVIECIPDCTSRDQLGRQTDFGMYDYFTRQYGDESTLAFQQARYNFIRSMAAYSLLLFLLQIKDRHNGNIMLDKKGHIIHIDFGFMFESSPGGNLGWEPDIKLTDEMVMIMGGKMEATPFKWFMEMCVRGYLAVRPYMDAVVSLVTLMLDTGLPCFRGQTIKLLKHRFSPNMTEREAANFIMKVIQSCFLSNRSRTYDMIQYYQNDIPY</sequence>
<comment type="function">
    <text evidence="5 6">Acts on phosphatidylinositol (PtdIns) in the first committed step in the production of the second messenger inositol-1,4,5,-trisphosphate.</text>
</comment>
<comment type="catalytic activity">
    <reaction evidence="5">
        <text>a 1,2-diacyl-sn-glycero-3-phospho-(1D-myo-inositol) + ATP = a 1,2-diacyl-sn-glycero-3-phospho-(1D-myo-inositol 4-phosphate) + ADP + H(+)</text>
        <dbReference type="Rhea" id="RHEA:19877"/>
        <dbReference type="ChEBI" id="CHEBI:15378"/>
        <dbReference type="ChEBI" id="CHEBI:30616"/>
        <dbReference type="ChEBI" id="CHEBI:57880"/>
        <dbReference type="ChEBI" id="CHEBI:58178"/>
        <dbReference type="ChEBI" id="CHEBI:456216"/>
        <dbReference type="EC" id="2.7.1.67"/>
    </reaction>
    <physiologicalReaction direction="left-to-right" evidence="18">
        <dbReference type="Rhea" id="RHEA:19878"/>
    </physiologicalReaction>
</comment>
<comment type="activity regulation">
    <text evidence="2 6 8 10 14">Activated by Triton X-100, insensitive to inhibition by adenosine and inhibited by wortmannin (By similarity). Isoform 2 is activated by detergents such as Triton X-100 and inhibited by adenosine (PubMed:7961848). The PI4K complex acts as a regulator of phosphatidylinositol 4-phosphate (PtdIns(4)P) synthesis (PubMed:23229899, PubMed:26571211). Interaction with TMEM150A regulates PtdIns(4)P synthesis (PubMed:25608530).</text>
</comment>
<comment type="biophysicochemical properties">
    <kinetics>
        <KM evidence="5">300 uM for ATP</KM>
    </kinetics>
</comment>
<comment type="subunit">
    <text evidence="6 7 8 10 12">Component of a phosphatidylinositol 4-kinase (PI4K) complex, composed of PI4KA, EFR3 (EFR3A or EFR3B), TTC7 (TTC7A or TTC7B) and HYCC (HYCC1 or HYCC2) (PubMed:23229899, PubMed:24417819, PubMed:26571211, PubMed:34415310). Interacts with TMEM150A; regulating recruitment to the plasma membrane (PubMed:25608530). Interacts with TTC7A (PubMed:34415310).</text>
</comment>
<comment type="subunit">
    <text evidence="11">(Microbial infection) Interacts with CHKA/Choline Kinase-alpha; CHKA bridges PI4KA and hepatitis C virus (HCV) non-structural protein 5A (NS5A) and potentiates NS5A-stimulated PI4KA activity, which then facilitates the targeting of the ternary complex to the ER for viral replication.</text>
</comment>
<comment type="interaction">
    <interactant intactId="EBI-723050">
        <id>P42356</id>
    </interactant>
    <interactant intactId="EBI-8753518">
        <id>PRO_0000037576</id>
        <dbReference type="UniProtKB" id="P27958"/>
    </interactant>
    <organismsDiffer>true</organismsDiffer>
    <experiments>7</experiments>
</comment>
<comment type="interaction">
    <interactant intactId="EBI-723050">
        <id>P42356</id>
    </interactant>
    <interactant intactId="EBI-6927873">
        <id>PRO_0000045602</id>
        <dbReference type="UniProtKB" id="Q99IB8"/>
    </interactant>
    <organismsDiffer>true</organismsDiffer>
    <experiments>5</experiments>
</comment>
<comment type="subcellular location">
    <subcellularLocation>
        <location evidence="6 7">Cytoplasm</location>
    </subcellularLocation>
    <subcellularLocation>
        <location evidence="6 7">Cell membrane</location>
    </subcellularLocation>
    <text evidence="6 8">Localization to the plasma membrane is mediated by the PI4K complex and association with EFR3 (EFR3A or EFR3B), TTC7 (TTC7A or TTC7B) and HYCC (HYCC1 or HYCC2) (PubMed:23229899). Localization to the plasma membrane is regulated by TMEM150A (PubMed:25608530).</text>
</comment>
<comment type="alternative products">
    <event type="alternative splicing"/>
    <isoform>
        <id>P42356-1</id>
        <name>1</name>
        <name evidence="15">PI4K230</name>
        <sequence type="displayed"/>
    </isoform>
    <isoform>
        <id>P42356-2</id>
        <name>2</name>
        <name evidence="15">PI4K97</name>
        <sequence type="described" ref="VSP_008805"/>
    </isoform>
</comment>
<comment type="tissue specificity">
    <text evidence="5 14">Expressed ubiquitously. Highest levels in placenta and brain. Little or no expression in lung, liver, pancreas, testis or leukocytes.</text>
</comment>
<comment type="disease" evidence="9 12 13">
    <disease id="DI-04528">
        <name>Neurodevelopmental disorder with spasticity, hypomyelinating leukodystrophy, and brain abnormalities</name>
        <acronym>NEDSPLB</acronym>
        <description>A severe autosomal recessive disorder characterized by global developmental delay with impaired intellectual development and poor or absent speech, axial hypotonia, and peripheral spasticity and hyperreflexia. Brain imaging shows hypomyelination with decreased white matter volume, cerebral and cerebellar atrophy, and thin corpus callosum. Polymicrogyria may be observed in rare cases. Some patients have a primary immunodeficiency or gastrointestinal disturbances similar to inflammatory bowel disease.</description>
        <dbReference type="MIM" id="616531"/>
    </disease>
    <text>The disease is caused by variants affecting the gene represented in this entry.</text>
</comment>
<comment type="disease" evidence="12">
    <disease id="DI-06318">
        <name>Gastrointestinal defects and immunodeficiency syndrome 2</name>
        <acronym>GIDID2</acronym>
        <description>A severe autosomal recessive disorder characterized by multiple intestinal atresia apparent soon after birth. Affected infants have a distended abdomen, bowel obstruction and do not pass meconium. There is some evidence of inflammatory bowel disease. Death occurs in the first weeks of life. Some patients may also have immunodeficiency.</description>
        <dbReference type="MIM" id="619708"/>
    </disease>
    <text>The disease is caused by variants affecting the gene represented in this entry.</text>
</comment>
<comment type="disease" evidence="13">
    <disease id="DI-06273">
        <name>Spastic paraplegia 84, autosomal recessive</name>
        <acronym>SPG84</acronym>
        <description>A form of spastic paraplegia, a neurodegenerative disorder characterized by a slow, gradual, progressive weakness and spasticity of the lower limbs. Rate of progression and the severity of symptoms are quite variable. Initial symptoms may include difficulty with balance, weakness and stiffness in the legs, muscle spasms, and dragging the toes when walking. In some forms of the disorder, bladder symptoms (such as incontinence) may appear, or the weakness and stiffness may spread to other parts of the body. SPG84 is characterized by onset of slowly progressive walking difficulties due to lower limb weakness, stiffness, and spasticity in the first 2 decades of life.</description>
        <dbReference type="MIM" id="619621"/>
    </disease>
    <text>The disease is caused by variants affecting the gene represented in this entry.</text>
</comment>
<comment type="similarity">
    <text evidence="17">Belongs to the PI3/PI4-kinase family. Type III PI4K subfamily.</text>
</comment>
<organism>
    <name type="scientific">Homo sapiens</name>
    <name type="common">Human</name>
    <dbReference type="NCBI Taxonomy" id="9606"/>
    <lineage>
        <taxon>Eukaryota</taxon>
        <taxon>Metazoa</taxon>
        <taxon>Chordata</taxon>
        <taxon>Craniata</taxon>
        <taxon>Vertebrata</taxon>
        <taxon>Euteleostomi</taxon>
        <taxon>Mammalia</taxon>
        <taxon>Eutheria</taxon>
        <taxon>Euarchontoglires</taxon>
        <taxon>Primates</taxon>
        <taxon>Haplorrhini</taxon>
        <taxon>Catarrhini</taxon>
        <taxon>Hominidae</taxon>
        <taxon>Homo</taxon>
    </lineage>
</organism>
<feature type="chain" id="PRO_0000088827" description="Phosphatidylinositol 4-kinase alpha">
    <location>
        <begin position="1"/>
        <end position="2102"/>
    </location>
</feature>
<feature type="domain" description="PIK helical" evidence="4">
    <location>
        <begin position="1530"/>
        <end position="1718"/>
    </location>
</feature>
<feature type="domain" description="PI3K/PI4K catalytic" evidence="3">
    <location>
        <begin position="1808"/>
        <end position="2086"/>
    </location>
</feature>
<feature type="region of interest" description="G-loop" evidence="3">
    <location>
        <begin position="1814"/>
        <end position="1820"/>
    </location>
</feature>
<feature type="region of interest" description="Catalytic loop" evidence="3">
    <location>
        <begin position="1954"/>
        <end position="1962"/>
    </location>
</feature>
<feature type="region of interest" description="Activation loop" evidence="3">
    <location>
        <begin position="1973"/>
        <end position="1997"/>
    </location>
</feature>
<feature type="modified residue" description="Phosphoserine" evidence="22">
    <location>
        <position position="230"/>
    </location>
</feature>
<feature type="modified residue" description="Phosphoserine" evidence="22">
    <location>
        <position position="256"/>
    </location>
</feature>
<feature type="modified residue" description="Phosphoserine" evidence="19 22">
    <location>
        <position position="257"/>
    </location>
</feature>
<feature type="modified residue" description="Phosphoserine" evidence="1">
    <location>
        <position position="259"/>
    </location>
</feature>
<feature type="modified residue" description="Phosphoserine" evidence="19">
    <location>
        <position position="260"/>
    </location>
</feature>
<feature type="modified residue" description="Phosphoserine" evidence="19 22">
    <location>
        <position position="262"/>
    </location>
</feature>
<feature type="modified residue" description="Phosphoserine" evidence="19 20 21 22">
    <location>
        <position position="265"/>
    </location>
</feature>
<feature type="modified residue" description="Phosphoserine" evidence="22">
    <location>
        <position position="429"/>
    </location>
</feature>
<feature type="modified residue" description="Phosphotyrosine" evidence="22">
    <location>
        <position position="1154"/>
    </location>
</feature>
<feature type="modified residue" description="Phosphoserine" evidence="21 22 23">
    <location>
        <position position="1436"/>
    </location>
</feature>
<feature type="splice variant" id="VSP_008805" description="In isoform 2." evidence="16">
    <location>
        <begin position="1"/>
        <end position="1248"/>
    </location>
</feature>
<feature type="sequence variant" id="VAR_086468" description="In NEDSPLB; uncertain significance; dbSNP:rs759091754." evidence="13">
    <original>R</original>
    <variation>W</variation>
    <location>
        <position position="119"/>
    </location>
</feature>
<feature type="sequence variant" id="VAR_050531" description="In dbSNP:rs17819211.">
    <original>M</original>
    <variation>V</variation>
    <location>
        <position position="380"/>
    </location>
</feature>
<feature type="sequence variant" id="VAR_086469" description="In NEDSPLB; uncertain significance; dbSNP:rs1298440445." evidence="13">
    <original>S</original>
    <variation>R</variation>
    <location>
        <position position="472"/>
    </location>
</feature>
<feature type="sequence variant" id="VAR_086470" description="In NEDSPLB." evidence="12">
    <location>
        <begin position="566"/>
        <end position="2102"/>
    </location>
</feature>
<feature type="sequence variant" id="VAR_086471" description="In NEDSPLB." evidence="13">
    <location>
        <begin position="618"/>
        <end position="2102"/>
    </location>
</feature>
<feature type="sequence variant" id="VAR_086472" description="In NEDSPLB; dbSNP:rs1490645147." evidence="12">
    <original>L</original>
    <variation>P</variation>
    <location>
        <position position="777"/>
    </location>
</feature>
<feature type="sequence variant" id="VAR_086473" description="In NEDSPLB." evidence="9">
    <location>
        <begin position="796"/>
        <end position="2102"/>
    </location>
</feature>
<feature type="sequence variant" id="VAR_086474" description="In NEDSPLB; uncertain significance; dbSNP:rs1351749039." evidence="13">
    <original>E</original>
    <variation>K</variation>
    <location>
        <position position="1152"/>
    </location>
</feature>
<feature type="sequence variant" id="VAR_086475" description="In NEDSPLB." evidence="12">
    <location>
        <begin position="1191"/>
        <end position="2102"/>
    </location>
</feature>
<feature type="sequence variant" id="VAR_086476" description="In NEDSPLB; uncertain significance; dbSNP:rs1929601378." evidence="13">
    <original>A</original>
    <variation>T</variation>
    <location>
        <position position="1198"/>
    </location>
</feature>
<feature type="sequence variant" id="VAR_086477" description="In NEDSPLB; uncertain significance." evidence="13">
    <original>H</original>
    <variation>R</variation>
    <location>
        <position position="1295"/>
    </location>
</feature>
<feature type="sequence variant" id="VAR_086478" description="In SPG84; uncertain significance; dbSNP:rs144363917." evidence="13">
    <original>V</original>
    <variation>M</variation>
    <location>
        <position position="1556"/>
    </location>
</feature>
<feature type="sequence variant" id="VAR_086479" description="In GIDID2; decreased interaction with TTC7A resulting in reduced PI4K complex stability; no effect on kinase activity; dbSNP:rs776650691." evidence="12">
    <original>Y</original>
    <variation>D</variation>
    <location>
        <position position="1623"/>
    </location>
</feature>
<feature type="sequence variant" id="VAR_086480" description="In NEDSPLB; dbSNP:rs888913273." evidence="13">
    <original>D</original>
    <variation>N</variation>
    <location>
        <position position="1664"/>
    </location>
</feature>
<feature type="sequence variant" id="VAR_086481" description="In SPG84; uncertain significance; dbSNP:rs2147194890." evidence="13">
    <original>T</original>
    <variation>I</variation>
    <location>
        <position position="1720"/>
    </location>
</feature>
<feature type="sequence variant" id="VAR_086482" description="In NEDSPLB; uncertain significance; dbSNP:rs142690596." evidence="12">
    <original>R</original>
    <variation>W</variation>
    <location>
        <position position="1733"/>
    </location>
</feature>
<feature type="sequence variant" id="VAR_086483" description="In NEDSPLB." evidence="12">
    <original>K</original>
    <variation>T</variation>
    <location>
        <position position="1808"/>
    </location>
</feature>
<feature type="sequence variant" id="VAR_086484" description="In SPG84; uncertain significance." evidence="13">
    <location>
        <position position="1820"/>
    </location>
</feature>
<feature type="sequence variant" id="VAR_059549" description="In dbSNP:rs2539908.">
    <original>V</original>
    <variation>L</variation>
    <location>
        <position position="1851"/>
    </location>
</feature>
<feature type="sequence variant" id="VAR_074640" description="In NEDSPLB; loss of kinase activity; no effect on protein abundance; dbSNP:rs747119727." evidence="9 12 13">
    <original>D</original>
    <variation>N</variation>
    <location>
        <position position="1854"/>
    </location>
</feature>
<feature type="sequence variant" id="VAR_086485" description="In NEDSPLB; dbSNP:rs2147171210." evidence="12">
    <original>G</original>
    <variation>E</variation>
    <location>
        <position position="1925"/>
    </location>
</feature>
<feature type="sequence variant" id="VAR_086486" description="In NEDSPLB; uncertain significance; dbSNP:rs773127016." evidence="13">
    <original>G</original>
    <variation>R</variation>
    <location>
        <position position="1925"/>
    </location>
</feature>
<feature type="sequence variant" id="VAR_086487" description="In NEDSPLB." evidence="12">
    <original>Y</original>
    <variation>C</variation>
    <location>
        <position position="1937"/>
    </location>
</feature>
<feature type="sequence variant" id="VAR_086488" description="In NEDSPLB; uncertain significance; dbSNP:rs770450191." evidence="13">
    <original>N</original>
    <variation>S</variation>
    <location>
        <position position="1987"/>
    </location>
</feature>
<feature type="sequence variant" id="VAR_086489" description="In NEDSPLB; uncertain significance; dbSNP:rs1601301648." evidence="13">
    <original>M</original>
    <variation>T</variation>
    <location>
        <position position="2041"/>
    </location>
</feature>
<feature type="mutagenesis site" description="Loss of kinase activity." evidence="12">
    <original>D</original>
    <variation>A</variation>
    <location>
        <position position="1957"/>
    </location>
</feature>
<feature type="sequence conflict" description="In Ref. 3; AAD13352." evidence="17" ref="3">
    <original>N</original>
    <variation>S</variation>
    <location>
        <position position="438"/>
    </location>
</feature>
<feature type="sequence conflict" description="In Ref. 4; AAH53654." evidence="17" ref="4">
    <original>S</original>
    <variation>I</variation>
    <location>
        <position position="1947"/>
    </location>
</feature>
<feature type="helix" evidence="24">
    <location>
        <begin position="31"/>
        <end position="44"/>
    </location>
</feature>
<feature type="strand" evidence="24">
    <location>
        <begin position="45"/>
        <end position="47"/>
    </location>
</feature>
<feature type="helix" evidence="24">
    <location>
        <begin position="50"/>
        <end position="59"/>
    </location>
</feature>
<feature type="helix" evidence="24">
    <location>
        <begin position="72"/>
        <end position="87"/>
    </location>
</feature>
<feature type="helix" evidence="24">
    <location>
        <begin position="93"/>
        <end position="106"/>
    </location>
</feature>
<feature type="helix" evidence="24">
    <location>
        <begin position="107"/>
        <end position="109"/>
    </location>
</feature>
<feature type="helix" evidence="24">
    <location>
        <begin position="127"/>
        <end position="145"/>
    </location>
</feature>
<feature type="helix" evidence="24">
    <location>
        <begin position="150"/>
        <end position="168"/>
    </location>
</feature>
<feature type="helix" evidence="24">
    <location>
        <begin position="177"/>
        <end position="182"/>
    </location>
</feature>
<feature type="helix" evidence="24">
    <location>
        <begin position="184"/>
        <end position="191"/>
    </location>
</feature>
<feature type="strand" evidence="24">
    <location>
        <begin position="200"/>
        <end position="202"/>
    </location>
</feature>
<feature type="helix" evidence="24">
    <location>
        <begin position="204"/>
        <end position="208"/>
    </location>
</feature>
<feature type="helix" evidence="24">
    <location>
        <begin position="297"/>
        <end position="300"/>
    </location>
</feature>
<feature type="strand" evidence="24">
    <location>
        <begin position="303"/>
        <end position="305"/>
    </location>
</feature>
<feature type="helix" evidence="24">
    <location>
        <begin position="326"/>
        <end position="339"/>
    </location>
</feature>
<feature type="helix" evidence="24">
    <location>
        <begin position="343"/>
        <end position="358"/>
    </location>
</feature>
<feature type="helix" evidence="24">
    <location>
        <begin position="370"/>
        <end position="384"/>
    </location>
</feature>
<feature type="turn" evidence="24">
    <location>
        <begin position="385"/>
        <end position="387"/>
    </location>
</feature>
<feature type="helix" evidence="24">
    <location>
        <begin position="393"/>
        <end position="413"/>
    </location>
</feature>
<feature type="helix" evidence="24">
    <location>
        <begin position="434"/>
        <end position="447"/>
    </location>
</feature>
<feature type="helix" evidence="24">
    <location>
        <begin position="452"/>
        <end position="466"/>
    </location>
</feature>
<feature type="helix" evidence="24">
    <location>
        <begin position="479"/>
        <end position="495"/>
    </location>
</feature>
<feature type="helix" evidence="24">
    <location>
        <begin position="500"/>
        <end position="512"/>
    </location>
</feature>
<feature type="helix" evidence="24">
    <location>
        <begin position="516"/>
        <end position="522"/>
    </location>
</feature>
<feature type="strand" evidence="24">
    <location>
        <begin position="538"/>
        <end position="540"/>
    </location>
</feature>
<feature type="helix" evidence="24">
    <location>
        <begin position="563"/>
        <end position="580"/>
    </location>
</feature>
<feature type="turn" evidence="24">
    <location>
        <begin position="581"/>
        <end position="583"/>
    </location>
</feature>
<feature type="helix" evidence="24">
    <location>
        <begin position="587"/>
        <end position="600"/>
    </location>
</feature>
<feature type="helix" evidence="24">
    <location>
        <begin position="612"/>
        <end position="626"/>
    </location>
</feature>
<feature type="turn" evidence="24">
    <location>
        <begin position="627"/>
        <end position="629"/>
    </location>
</feature>
<feature type="strand" evidence="24">
    <location>
        <begin position="630"/>
        <end position="632"/>
    </location>
</feature>
<feature type="helix" evidence="24">
    <location>
        <begin position="634"/>
        <end position="643"/>
    </location>
</feature>
<feature type="helix" evidence="24">
    <location>
        <begin position="653"/>
        <end position="664"/>
    </location>
</feature>
<feature type="helix" evidence="24">
    <location>
        <begin position="669"/>
        <end position="685"/>
    </location>
</feature>
<feature type="helix" evidence="24">
    <location>
        <begin position="703"/>
        <end position="705"/>
    </location>
</feature>
<feature type="helix" evidence="24">
    <location>
        <begin position="707"/>
        <end position="718"/>
    </location>
</feature>
<feature type="helix" evidence="24">
    <location>
        <begin position="723"/>
        <end position="739"/>
    </location>
</feature>
<feature type="helix" evidence="24">
    <location>
        <begin position="768"/>
        <end position="770"/>
    </location>
</feature>
<feature type="helix" evidence="24">
    <location>
        <begin position="771"/>
        <end position="778"/>
    </location>
</feature>
<feature type="helix" evidence="24">
    <location>
        <begin position="789"/>
        <end position="804"/>
    </location>
</feature>
<feature type="helix" evidence="24">
    <location>
        <begin position="818"/>
        <end position="827"/>
    </location>
</feature>
<feature type="turn" evidence="24">
    <location>
        <begin position="842"/>
        <end position="844"/>
    </location>
</feature>
<feature type="helix" evidence="24">
    <location>
        <begin position="858"/>
        <end position="872"/>
    </location>
</feature>
<feature type="helix" evidence="24">
    <location>
        <begin position="876"/>
        <end position="882"/>
    </location>
</feature>
<feature type="helix" evidence="24">
    <location>
        <begin position="887"/>
        <end position="906"/>
    </location>
</feature>
<feature type="turn" evidence="24">
    <location>
        <begin position="910"/>
        <end position="912"/>
    </location>
</feature>
<feature type="helix" evidence="24">
    <location>
        <begin position="913"/>
        <end position="920"/>
    </location>
</feature>
<feature type="helix" evidence="24">
    <location>
        <begin position="923"/>
        <end position="927"/>
    </location>
</feature>
<feature type="helix" evidence="24">
    <location>
        <begin position="934"/>
        <end position="951"/>
    </location>
</feature>
<feature type="helix" evidence="24">
    <location>
        <begin position="959"/>
        <end position="973"/>
    </location>
</feature>
<feature type="helix" evidence="24">
    <location>
        <begin position="974"/>
        <end position="976"/>
    </location>
</feature>
<feature type="strand" evidence="24">
    <location>
        <begin position="978"/>
        <end position="980"/>
    </location>
</feature>
<feature type="helix" evidence="24">
    <location>
        <begin position="981"/>
        <end position="996"/>
    </location>
</feature>
<feature type="helix" evidence="24">
    <location>
        <begin position="998"/>
        <end position="1000"/>
    </location>
</feature>
<feature type="helix" evidence="24">
    <location>
        <begin position="1006"/>
        <end position="1021"/>
    </location>
</feature>
<feature type="helix" evidence="24">
    <location>
        <begin position="1047"/>
        <end position="1071"/>
    </location>
</feature>
<feature type="helix" evidence="24">
    <location>
        <begin position="1073"/>
        <end position="1084"/>
    </location>
</feature>
<feature type="helix" evidence="24">
    <location>
        <begin position="1088"/>
        <end position="1092"/>
    </location>
</feature>
<feature type="helix" evidence="24">
    <location>
        <begin position="1098"/>
        <end position="1108"/>
    </location>
</feature>
<feature type="helix" evidence="24">
    <location>
        <begin position="1137"/>
        <end position="1156"/>
    </location>
</feature>
<feature type="helix" evidence="24">
    <location>
        <begin position="1170"/>
        <end position="1183"/>
    </location>
</feature>
<feature type="helix" evidence="24">
    <location>
        <begin position="1186"/>
        <end position="1201"/>
    </location>
</feature>
<feature type="strand" evidence="24">
    <location>
        <begin position="1202"/>
        <end position="1205"/>
    </location>
</feature>
<feature type="helix" evidence="24">
    <location>
        <begin position="1208"/>
        <end position="1215"/>
    </location>
</feature>
<feature type="helix" evidence="24">
    <location>
        <begin position="1218"/>
        <end position="1220"/>
    </location>
</feature>
<feature type="helix" evidence="24">
    <location>
        <begin position="1224"/>
        <end position="1240"/>
    </location>
</feature>
<feature type="strand" evidence="24">
    <location>
        <begin position="1241"/>
        <end position="1243"/>
    </location>
</feature>
<feature type="helix" evidence="24">
    <location>
        <begin position="1245"/>
        <end position="1262"/>
    </location>
</feature>
<feature type="helix" evidence="24">
    <location>
        <begin position="1276"/>
        <end position="1278"/>
    </location>
</feature>
<feature type="strand" evidence="24">
    <location>
        <begin position="1281"/>
        <end position="1283"/>
    </location>
</feature>
<feature type="helix" evidence="24">
    <location>
        <begin position="1294"/>
        <end position="1312"/>
    </location>
</feature>
<feature type="helix" evidence="24">
    <location>
        <begin position="1316"/>
        <end position="1325"/>
    </location>
</feature>
<feature type="strand" evidence="24">
    <location>
        <begin position="1333"/>
        <end position="1335"/>
    </location>
</feature>
<feature type="helix" evidence="24">
    <location>
        <begin position="1343"/>
        <end position="1345"/>
    </location>
</feature>
<feature type="helix" evidence="24">
    <location>
        <begin position="1347"/>
        <end position="1360"/>
    </location>
</feature>
<feature type="strand" evidence="24">
    <location>
        <begin position="1367"/>
        <end position="1369"/>
    </location>
</feature>
<feature type="helix" evidence="24">
    <location>
        <begin position="1370"/>
        <end position="1385"/>
    </location>
</feature>
<feature type="helix" evidence="24">
    <location>
        <begin position="1401"/>
        <end position="1416"/>
    </location>
</feature>
<feature type="helix" evidence="24">
    <location>
        <begin position="1478"/>
        <end position="1507"/>
    </location>
</feature>
<feature type="helix" evidence="24">
    <location>
        <begin position="1520"/>
        <end position="1533"/>
    </location>
</feature>
<feature type="turn" evidence="24">
    <location>
        <begin position="1538"/>
        <end position="1540"/>
    </location>
</feature>
<feature type="helix" evidence="24">
    <location>
        <begin position="1541"/>
        <end position="1550"/>
    </location>
</feature>
<feature type="helix" evidence="24">
    <location>
        <begin position="1552"/>
        <end position="1557"/>
    </location>
</feature>
<feature type="helix" evidence="24">
    <location>
        <begin position="1558"/>
        <end position="1560"/>
    </location>
</feature>
<feature type="helix" evidence="24">
    <location>
        <begin position="1567"/>
        <end position="1578"/>
    </location>
</feature>
<feature type="helix" evidence="24">
    <location>
        <begin position="1586"/>
        <end position="1589"/>
    </location>
</feature>
<feature type="helix" evidence="24">
    <location>
        <begin position="1590"/>
        <end position="1592"/>
    </location>
</feature>
<feature type="strand" evidence="24">
    <location>
        <begin position="1598"/>
        <end position="1600"/>
    </location>
</feature>
<feature type="helix" evidence="24">
    <location>
        <begin position="1609"/>
        <end position="1611"/>
    </location>
</feature>
<feature type="helix" evidence="24">
    <location>
        <begin position="1617"/>
        <end position="1620"/>
    </location>
</feature>
<feature type="helix" evidence="24">
    <location>
        <begin position="1621"/>
        <end position="1624"/>
    </location>
</feature>
<feature type="strand" evidence="24">
    <location>
        <begin position="1625"/>
        <end position="1628"/>
    </location>
</feature>
<feature type="helix" evidence="24">
    <location>
        <begin position="1632"/>
        <end position="1642"/>
    </location>
</feature>
<feature type="helix" evidence="24">
    <location>
        <begin position="1647"/>
        <end position="1652"/>
    </location>
</feature>
<feature type="helix" evidence="24">
    <location>
        <begin position="1654"/>
        <end position="1659"/>
    </location>
</feature>
<feature type="helix" evidence="24">
    <location>
        <begin position="1660"/>
        <end position="1663"/>
    </location>
</feature>
<feature type="helix" evidence="24">
    <location>
        <begin position="1668"/>
        <end position="1679"/>
    </location>
</feature>
<feature type="helix" evidence="24">
    <location>
        <begin position="1682"/>
        <end position="1693"/>
    </location>
</feature>
<feature type="strand" evidence="24">
    <location>
        <begin position="1696"/>
        <end position="1700"/>
    </location>
</feature>
<feature type="strand" evidence="24">
    <location>
        <begin position="1702"/>
        <end position="1704"/>
    </location>
</feature>
<feature type="turn" evidence="24">
    <location>
        <begin position="1706"/>
        <end position="1708"/>
    </location>
</feature>
<feature type="helix" evidence="24">
    <location>
        <begin position="1709"/>
        <end position="1722"/>
    </location>
</feature>
<feature type="helix" evidence="24">
    <location>
        <begin position="1725"/>
        <end position="1747"/>
    </location>
</feature>
<feature type="turn" evidence="24">
    <location>
        <begin position="1748"/>
        <end position="1750"/>
    </location>
</feature>
<feature type="helix" evidence="24">
    <location>
        <begin position="1755"/>
        <end position="1767"/>
    </location>
</feature>
<feature type="strand" evidence="24">
    <location>
        <begin position="1782"/>
        <end position="1787"/>
    </location>
</feature>
<feature type="strand" evidence="24">
    <location>
        <begin position="1803"/>
        <end position="1811"/>
    </location>
</feature>
<feature type="helix" evidence="24">
    <location>
        <begin position="1815"/>
        <end position="1823"/>
    </location>
</feature>
<feature type="strand" evidence="24">
    <location>
        <begin position="1842"/>
        <end position="1853"/>
    </location>
</feature>
<feature type="helix" evidence="24">
    <location>
        <begin position="1857"/>
        <end position="1875"/>
    </location>
</feature>
<feature type="strand" evidence="24">
    <location>
        <begin position="1886"/>
        <end position="1890"/>
    </location>
</feature>
<feature type="strand" evidence="24">
    <location>
        <begin position="1893"/>
        <end position="1898"/>
    </location>
</feature>
<feature type="turn" evidence="24">
    <location>
        <begin position="1905"/>
        <end position="1907"/>
    </location>
</feature>
<feature type="helix" evidence="24">
    <location>
        <begin position="1916"/>
        <end position="1924"/>
    </location>
</feature>
<feature type="helix" evidence="24">
    <location>
        <begin position="1930"/>
        <end position="1953"/>
    </location>
</feature>
<feature type="strand" evidence="24">
    <location>
        <begin position="1962"/>
        <end position="1965"/>
    </location>
</feature>
<feature type="strand" evidence="24">
    <location>
        <begin position="1967"/>
        <end position="1969"/>
    </location>
</feature>
<feature type="strand" evidence="24">
    <location>
        <begin position="1971"/>
        <end position="1973"/>
    </location>
</feature>
<feature type="helix" evidence="24">
    <location>
        <begin position="1999"/>
        <end position="2003"/>
    </location>
</feature>
<feature type="helix" evidence="24">
    <location>
        <begin position="2011"/>
        <end position="2027"/>
    </location>
</feature>
<feature type="helix" evidence="24">
    <location>
        <begin position="2028"/>
        <end position="2030"/>
    </location>
</feature>
<feature type="helix" evidence="24">
    <location>
        <begin position="2031"/>
        <end position="2042"/>
    </location>
</feature>
<feature type="helix" evidence="24">
    <location>
        <begin position="2053"/>
        <end position="2060"/>
    </location>
</feature>
<feature type="helix" evidence="24">
    <location>
        <begin position="2067"/>
        <end position="2080"/>
    </location>
</feature>
<gene>
    <name type="primary">PI4KA</name>
    <name type="synonym">PIK4</name>
    <name type="synonym">PIK4CA</name>
</gene>
<name>PI4KA_HUMAN</name>
<accession>P42356</accession>
<accession>Q7Z625</accession>
<accession>Q9UPG2</accession>